<organism>
    <name type="scientific">Mycobacterium tuberculosis (strain ATCC 25177 / H37Ra)</name>
    <dbReference type="NCBI Taxonomy" id="419947"/>
    <lineage>
        <taxon>Bacteria</taxon>
        <taxon>Bacillati</taxon>
        <taxon>Actinomycetota</taxon>
        <taxon>Actinomycetes</taxon>
        <taxon>Mycobacteriales</taxon>
        <taxon>Mycobacteriaceae</taxon>
        <taxon>Mycobacterium</taxon>
        <taxon>Mycobacterium tuberculosis complex</taxon>
    </lineage>
</organism>
<gene>
    <name evidence="1" type="primary">rpsR2</name>
    <name type="ordered locus">MRA_2070</name>
</gene>
<reference key="1">
    <citation type="journal article" date="2008" name="PLoS ONE">
        <title>Genetic basis of virulence attenuation revealed by comparative genomic analysis of Mycobacterium tuberculosis strain H37Ra versus H37Rv.</title>
        <authorList>
            <person name="Zheng H."/>
            <person name="Lu L."/>
            <person name="Wang B."/>
            <person name="Pu S."/>
            <person name="Zhang X."/>
            <person name="Zhu G."/>
            <person name="Shi W."/>
            <person name="Zhang L."/>
            <person name="Wang H."/>
            <person name="Wang S."/>
            <person name="Zhao G."/>
            <person name="Zhang Y."/>
        </authorList>
    </citation>
    <scope>NUCLEOTIDE SEQUENCE [LARGE SCALE GENOMIC DNA]</scope>
    <source>
        <strain>ATCC 25177 / H37Ra</strain>
    </source>
</reference>
<sequence length="88" mass="9696">MAAKSARKGPTKAKKNLLDSLGVESVDYKDTATLRVFISDRGKIRSRGVTGLTVQQQRQVAQAIKNAREMALLPYPGQDRQRRAALCP</sequence>
<proteinExistence type="inferred from homology"/>
<protein>
    <recommendedName>
        <fullName evidence="1">Small ribosomal subunit protein bS18B</fullName>
    </recommendedName>
    <alternativeName>
        <fullName evidence="2">30S ribosomal protein S18 2</fullName>
    </alternativeName>
</protein>
<dbReference type="EMBL" id="CP000611">
    <property type="protein sequence ID" value="ABQ73830.1"/>
    <property type="molecule type" value="Genomic_DNA"/>
</dbReference>
<dbReference type="SMR" id="A5U480"/>
<dbReference type="KEGG" id="mra:MRA_2070"/>
<dbReference type="eggNOG" id="COG0238">
    <property type="taxonomic scope" value="Bacteria"/>
</dbReference>
<dbReference type="HOGENOM" id="CLU_148710_1_0_11"/>
<dbReference type="Proteomes" id="UP000001988">
    <property type="component" value="Chromosome"/>
</dbReference>
<dbReference type="GO" id="GO:0022627">
    <property type="term" value="C:cytosolic small ribosomal subunit"/>
    <property type="evidence" value="ECO:0007669"/>
    <property type="project" value="TreeGrafter"/>
</dbReference>
<dbReference type="GO" id="GO:0070181">
    <property type="term" value="F:small ribosomal subunit rRNA binding"/>
    <property type="evidence" value="ECO:0007669"/>
    <property type="project" value="TreeGrafter"/>
</dbReference>
<dbReference type="GO" id="GO:0003735">
    <property type="term" value="F:structural constituent of ribosome"/>
    <property type="evidence" value="ECO:0007669"/>
    <property type="project" value="InterPro"/>
</dbReference>
<dbReference type="GO" id="GO:0006412">
    <property type="term" value="P:translation"/>
    <property type="evidence" value="ECO:0007669"/>
    <property type="project" value="UniProtKB-UniRule"/>
</dbReference>
<dbReference type="FunFam" id="4.10.640.10:FF:000016">
    <property type="entry name" value="30S ribosomal protein S18"/>
    <property type="match status" value="1"/>
</dbReference>
<dbReference type="Gene3D" id="4.10.640.10">
    <property type="entry name" value="Ribosomal protein S18"/>
    <property type="match status" value="1"/>
</dbReference>
<dbReference type="HAMAP" id="MF_00270">
    <property type="entry name" value="Ribosomal_bS18"/>
    <property type="match status" value="1"/>
</dbReference>
<dbReference type="InterPro" id="IPR001648">
    <property type="entry name" value="Ribosomal_bS18"/>
</dbReference>
<dbReference type="InterPro" id="IPR018275">
    <property type="entry name" value="Ribosomal_bS18_CS"/>
</dbReference>
<dbReference type="InterPro" id="IPR036870">
    <property type="entry name" value="Ribosomal_bS18_sf"/>
</dbReference>
<dbReference type="NCBIfam" id="TIGR00165">
    <property type="entry name" value="S18"/>
    <property type="match status" value="1"/>
</dbReference>
<dbReference type="PANTHER" id="PTHR13479">
    <property type="entry name" value="30S RIBOSOMAL PROTEIN S18"/>
    <property type="match status" value="1"/>
</dbReference>
<dbReference type="PANTHER" id="PTHR13479:SF40">
    <property type="entry name" value="SMALL RIBOSOMAL SUBUNIT PROTEIN BS18M"/>
    <property type="match status" value="1"/>
</dbReference>
<dbReference type="Pfam" id="PF01084">
    <property type="entry name" value="Ribosomal_S18"/>
    <property type="match status" value="1"/>
</dbReference>
<dbReference type="PRINTS" id="PR00974">
    <property type="entry name" value="RIBOSOMALS18"/>
</dbReference>
<dbReference type="SUPFAM" id="SSF46911">
    <property type="entry name" value="Ribosomal protein S18"/>
    <property type="match status" value="1"/>
</dbReference>
<dbReference type="PROSITE" id="PS00057">
    <property type="entry name" value="RIBOSOMAL_S18"/>
    <property type="match status" value="1"/>
</dbReference>
<keyword id="KW-1185">Reference proteome</keyword>
<keyword id="KW-0687">Ribonucleoprotein</keyword>
<keyword id="KW-0689">Ribosomal protein</keyword>
<keyword id="KW-0694">RNA-binding</keyword>
<keyword id="KW-0699">rRNA-binding</keyword>
<evidence type="ECO:0000255" key="1">
    <source>
        <dbReference type="HAMAP-Rule" id="MF_00270"/>
    </source>
</evidence>
<evidence type="ECO:0000305" key="2"/>
<accession>A5U480</accession>
<name>RS182_MYCTA</name>
<comment type="function">
    <text evidence="1">Binds as a heterodimer with protein bS6 to the central domain of the 16S rRNA, where it helps stabilize the platform of the 30S subunit.</text>
</comment>
<comment type="subunit">
    <text evidence="1">Part of the 30S ribosomal subunit. Forms a tight heterodimer with protein bS6.</text>
</comment>
<comment type="similarity">
    <text evidence="1">Belongs to the bacterial ribosomal protein bS18 family.</text>
</comment>
<feature type="chain" id="PRO_0000345507" description="Small ribosomal subunit protein bS18B">
    <location>
        <begin position="1"/>
        <end position="88"/>
    </location>
</feature>